<sequence>IPYNPQSQGVVESMNKELKKIIGQVRDQAEHLKTAVQMAVFIHNFKRKGGIGGYSAGERIIDIIATDIQTKELQKQITKIQNFRVYYRDSRDPIWKGPAKLLWKGEGAVVIQDNSDIKVVPRRKVKIIRDYGKQMAGDDCVASRQDED</sequence>
<gene>
    <name type="primary">gag-pol</name>
</gene>
<accession>P04586</accession>
<feature type="chain" id="PRO_0000261289" description="Gag-Pol polyprotein">
    <location>
        <begin position="1" status="less than"/>
        <end position="148"/>
    </location>
</feature>
<feature type="chain" id="PRO_0000042448" description="Integrase" evidence="1">
    <location>
        <begin position="1" status="less than"/>
        <end position="148"/>
    </location>
</feature>
<feature type="domain" description="Integrase catalytic" evidence="5">
    <location>
        <begin position="1" status="less than"/>
        <end position="64"/>
    </location>
</feature>
<feature type="DNA-binding region" description="Integrase-type" evidence="6">
    <location>
        <begin position="83"/>
        <end position="130"/>
    </location>
</feature>
<feature type="binding site" evidence="3">
    <location>
        <position position="12"/>
    </location>
    <ligand>
        <name>Mg(2+)</name>
        <dbReference type="ChEBI" id="CHEBI:18420"/>
        <note>catalytic; for integrase activity</note>
    </ligand>
</feature>
<feature type="non-terminal residue">
    <location>
        <position position="1"/>
    </location>
</feature>
<feature type="strand" evidence="7">
    <location>
        <begin position="82"/>
        <end position="88"/>
    </location>
</feature>
<feature type="strand" evidence="7">
    <location>
        <begin position="93"/>
        <end position="115"/>
    </location>
</feature>
<feature type="strand" evidence="7">
    <location>
        <begin position="117"/>
        <end position="121"/>
    </location>
</feature>
<feature type="helix" evidence="7">
    <location>
        <begin position="122"/>
        <end position="124"/>
    </location>
</feature>
<feature type="strand" evidence="7">
    <location>
        <begin position="125"/>
        <end position="129"/>
    </location>
</feature>
<organismHost>
    <name type="scientific">Homo sapiens</name>
    <name type="common">Human</name>
    <dbReference type="NCBI Taxonomy" id="9606"/>
</organismHost>
<dbReference type="EC" id="2.7.7.-" evidence="3"/>
<dbReference type="EC" id="3.1.-.-" evidence="3"/>
<dbReference type="EMBL" id="K03458">
    <property type="protein sequence ID" value="AAA45376.1"/>
    <property type="molecule type" value="Genomic_RNA"/>
</dbReference>
<dbReference type="PIR" id="A26192">
    <property type="entry name" value="A26192"/>
</dbReference>
<dbReference type="PDB" id="1IHV">
    <property type="method" value="NMR"/>
    <property type="chains" value="A/B=80-130"/>
</dbReference>
<dbReference type="PDB" id="1IHW">
    <property type="method" value="NMR"/>
    <property type="chains" value="A/B=80-130"/>
</dbReference>
<dbReference type="PDBsum" id="1IHV"/>
<dbReference type="PDBsum" id="1IHW"/>
<dbReference type="SMR" id="P04586"/>
<dbReference type="MEROPS" id="A02.001"/>
<dbReference type="EvolutionaryTrace" id="P04586"/>
<dbReference type="GO" id="GO:0003677">
    <property type="term" value="F:DNA binding"/>
    <property type="evidence" value="ECO:0007669"/>
    <property type="project" value="UniProtKB-KW"/>
</dbReference>
<dbReference type="GO" id="GO:0004519">
    <property type="term" value="F:endonuclease activity"/>
    <property type="evidence" value="ECO:0007669"/>
    <property type="project" value="UniProtKB-KW"/>
</dbReference>
<dbReference type="GO" id="GO:0008289">
    <property type="term" value="F:lipid binding"/>
    <property type="evidence" value="ECO:0007669"/>
    <property type="project" value="UniProtKB-KW"/>
</dbReference>
<dbReference type="GO" id="GO:0046872">
    <property type="term" value="F:metal ion binding"/>
    <property type="evidence" value="ECO:0007669"/>
    <property type="project" value="UniProtKB-KW"/>
</dbReference>
<dbReference type="GO" id="GO:0016779">
    <property type="term" value="F:nucleotidyltransferase activity"/>
    <property type="evidence" value="ECO:0007669"/>
    <property type="project" value="UniProtKB-KW"/>
</dbReference>
<dbReference type="GO" id="GO:0015074">
    <property type="term" value="P:DNA integration"/>
    <property type="evidence" value="ECO:0007669"/>
    <property type="project" value="UniProtKB-KW"/>
</dbReference>
<dbReference type="GO" id="GO:0006310">
    <property type="term" value="P:DNA recombination"/>
    <property type="evidence" value="ECO:0007669"/>
    <property type="project" value="UniProtKB-KW"/>
</dbReference>
<dbReference type="GO" id="GO:0075713">
    <property type="term" value="P:establishment of integrated proviral latency"/>
    <property type="evidence" value="ECO:0007669"/>
    <property type="project" value="UniProtKB-KW"/>
</dbReference>
<dbReference type="GO" id="GO:0046718">
    <property type="term" value="P:symbiont entry into host cell"/>
    <property type="evidence" value="ECO:0007669"/>
    <property type="project" value="UniProtKB-KW"/>
</dbReference>
<dbReference type="GO" id="GO:0039657">
    <property type="term" value="P:symbiont-mediated suppression of host gene expression"/>
    <property type="evidence" value="ECO:0007669"/>
    <property type="project" value="UniProtKB-KW"/>
</dbReference>
<dbReference type="GO" id="GO:0044826">
    <property type="term" value="P:viral genome integration into host DNA"/>
    <property type="evidence" value="ECO:0007669"/>
    <property type="project" value="UniProtKB-KW"/>
</dbReference>
<dbReference type="FunFam" id="2.30.30.10:FF:000001">
    <property type="entry name" value="POL polyprotein"/>
    <property type="match status" value="1"/>
</dbReference>
<dbReference type="Gene3D" id="2.30.30.10">
    <property type="entry name" value="Integrase, C-terminal domain superfamily, retroviral"/>
    <property type="match status" value="1"/>
</dbReference>
<dbReference type="Gene3D" id="3.30.420.10">
    <property type="entry name" value="Ribonuclease H-like superfamily/Ribonuclease H"/>
    <property type="match status" value="1"/>
</dbReference>
<dbReference type="IDEAL" id="IID90032"/>
<dbReference type="InterPro" id="IPR036862">
    <property type="entry name" value="Integrase_C_dom_sf_retrovir"/>
</dbReference>
<dbReference type="InterPro" id="IPR001037">
    <property type="entry name" value="Integrase_C_retrovir"/>
</dbReference>
<dbReference type="InterPro" id="IPR001584">
    <property type="entry name" value="Integrase_cat-core"/>
</dbReference>
<dbReference type="InterPro" id="IPR012337">
    <property type="entry name" value="RNaseH-like_sf"/>
</dbReference>
<dbReference type="InterPro" id="IPR036397">
    <property type="entry name" value="RNaseH_sf"/>
</dbReference>
<dbReference type="Pfam" id="PF00552">
    <property type="entry name" value="IN_DBD_C"/>
    <property type="match status" value="1"/>
</dbReference>
<dbReference type="SUPFAM" id="SSF50122">
    <property type="entry name" value="DNA-binding domain of retroviral integrase"/>
    <property type="match status" value="1"/>
</dbReference>
<dbReference type="SUPFAM" id="SSF53098">
    <property type="entry name" value="Ribonuclease H-like"/>
    <property type="match status" value="1"/>
</dbReference>
<dbReference type="PROSITE" id="PS50994">
    <property type="entry name" value="INTEGRASE"/>
    <property type="match status" value="1"/>
</dbReference>
<dbReference type="PROSITE" id="PS51027">
    <property type="entry name" value="INTEGRASE_DBD"/>
    <property type="match status" value="1"/>
</dbReference>
<proteinExistence type="evidence at protein level"/>
<reference key="1">
    <citation type="journal article" date="1987" name="Gene">
        <title>Molecular characterization of human immunodeficiency virus from Zaire: nucleotide sequence analysis identifies conserved and variable domains in the envelope gene.</title>
        <authorList>
            <person name="Srinivasan A."/>
            <person name="Anand R."/>
            <person name="York D."/>
            <person name="Ranganathan P."/>
            <person name="Feorino P."/>
            <person name="Schochetman G."/>
            <person name="Curran J."/>
            <person name="Kalyanaraman V.S."/>
            <person name="Luciw P.A."/>
            <person name="Sanchez-Pescador R."/>
        </authorList>
    </citation>
    <scope>NUCLEOTIDE SEQUENCE [GENOMIC RNA]</scope>
</reference>
<reference key="2">
    <citation type="journal article" date="1995" name="Biochemistry">
        <title>Solution structure of the DNA binding domain of HIV-1 integrase.</title>
        <authorList>
            <person name="Lodi P.J."/>
            <person name="Ernst J.A."/>
            <person name="Kuszewski J."/>
            <person name="Hickman A.B."/>
            <person name="Engelman A."/>
            <person name="Craigie R."/>
            <person name="Clore G.M."/>
            <person name="Gronenborn A.M."/>
        </authorList>
    </citation>
    <scope>STRUCTURE BY NMR OF 80-130</scope>
</reference>
<keyword id="KW-0002">3D-structure</keyword>
<keyword id="KW-0014">AIDS</keyword>
<keyword id="KW-0229">DNA integration</keyword>
<keyword id="KW-0233">DNA recombination</keyword>
<keyword id="KW-0238">DNA-binding</keyword>
<keyword id="KW-0255">Endonuclease</keyword>
<keyword id="KW-1262">Eukaryotic host gene expression shutoff by virus</keyword>
<keyword id="KW-1193">Eukaryotic host translation shutoff by virus</keyword>
<keyword id="KW-1190">Host gene expression shutoff by virus</keyword>
<keyword id="KW-0945">Host-virus interaction</keyword>
<keyword id="KW-0378">Hydrolase</keyword>
<keyword id="KW-0446">Lipid-binding</keyword>
<keyword id="KW-0460">Magnesium</keyword>
<keyword id="KW-0479">Metal-binding</keyword>
<keyword id="KW-0540">Nuclease</keyword>
<keyword id="KW-0548">Nucleotidyltransferase</keyword>
<keyword id="KW-0808">Transferase</keyword>
<keyword id="KW-1179">Viral genome integration</keyword>
<keyword id="KW-1160">Virus entry into host cell</keyword>
<name>POL_HV1Z6</name>
<protein>
    <recommendedName>
        <fullName>Gag-Pol polyprotein</fullName>
    </recommendedName>
    <alternativeName>
        <fullName>Pr160Gag-Pol</fullName>
    </alternativeName>
    <component>
        <recommendedName>
            <fullName>Integrase</fullName>
            <shortName>IN</shortName>
            <ecNumber evidence="3">2.7.7.-</ecNumber>
            <ecNumber evidence="3">3.1.-.-</ecNumber>
        </recommendedName>
    </component>
</protein>
<evidence type="ECO:0000250" key="1"/>
<evidence type="ECO:0000250" key="2">
    <source>
        <dbReference type="UniProtKB" id="P03367"/>
    </source>
</evidence>
<evidence type="ECO:0000250" key="3">
    <source>
        <dbReference type="UniProtKB" id="P04585"/>
    </source>
</evidence>
<evidence type="ECO:0000250" key="4">
    <source>
        <dbReference type="UniProtKB" id="P12497"/>
    </source>
</evidence>
<evidence type="ECO:0000255" key="5">
    <source>
        <dbReference type="PROSITE-ProRule" id="PRU00457"/>
    </source>
</evidence>
<evidence type="ECO:0000255" key="6">
    <source>
        <dbReference type="PROSITE-ProRule" id="PRU00506"/>
    </source>
</evidence>
<evidence type="ECO:0007829" key="7">
    <source>
        <dbReference type="PDB" id="1IHV"/>
    </source>
</evidence>
<organism>
    <name type="scientific">Human immunodeficiency virus type 1 group M subtype D (isolate Z6)</name>
    <name type="common">HIV-1</name>
    <dbReference type="NCBI Taxonomy" id="11708"/>
    <lineage>
        <taxon>Viruses</taxon>
        <taxon>Riboviria</taxon>
        <taxon>Pararnavirae</taxon>
        <taxon>Artverviricota</taxon>
        <taxon>Revtraviricetes</taxon>
        <taxon>Ortervirales</taxon>
        <taxon>Retroviridae</taxon>
        <taxon>Orthoretrovirinae</taxon>
        <taxon>Lentivirus</taxon>
        <taxon>Human immunodeficiency virus type 1</taxon>
    </lineage>
</organism>
<comment type="function">
    <molecule>Integrase</molecule>
    <text evidence="3">Catalyzes viral DNA integration into the host chromosome, by performing a series of DNA cutting and joining reactions. This enzyme activity takes place after virion entry into a cell and reverse transcription of the RNA genome in dsDNA. The first step in the integration process is 3' processing. This step requires a complex comprising the viral genome, matrix protein, Vpr and integrase. This complex is called the pre-integration complex (PIC). The integrase protein removes 2 nucleotides from each 3' end of the viral DNA, leaving recessed CA OH's at the 3' ends. In the second step, the PIC enters cell nucleus. This process is mediated through integrase and Vpr proteins, and allows the virus to infect a non dividing cell. This ability to enter the nucleus is specific of lentiviruses, other retroviruses cannot and rely on cell division to access cell chromosomes. In the third step, termed strand transfer, the integrase protein joins the previously processed 3' ends to the 5' ends of strands of target cellular DNA at the site of integration. The 5'-ends are produced by integrase-catalyzed staggered cuts, 5 bp apart. A Y-shaped, gapped, recombination intermediate results, with the 5'-ends of the viral DNA strands and the 3' ends of target DNA strands remaining unjoined, flanking a gap of 5 bp. The last step is viral DNA integration into host chromosome. This involves host DNA repair synthesis in which the 5 bp gaps between the unjoined strands are filled in and then ligated. Since this process occurs at both cuts flanking the HIV genome, a 5 bp duplication of host DNA is produced at the ends of HIV-1 integration. Alternatively, Integrase may catalyze the excision of viral DNA just after strand transfer, this is termed disintegration.</text>
</comment>
<comment type="subunit">
    <molecule>Integrase</molecule>
    <text evidence="2 3 4">Homotetramer; may further associate as a homohexadecamer (By similarity). Part of the pre-integration complex (PIC) which is composed of viral genome, matrix protein, Vpr and integrase. Interacts with human SMARCB1/INI1 and human PSIP1/LEDGF isoform 1. Interacts with human KPNA3; this interaction might play a role in nuclear import of the pre-integration complex (By similarity). Interacts with human NUP153; this interaction might play a role in nuclear import of the pre-integration complex (By similarity).</text>
</comment>
<comment type="PTM">
    <text evidence="1">Specific enzymatic cleavages by the viral protease yield mature proteins.</text>
</comment>